<organismHost>
    <name type="scientific">Homo sapiens</name>
    <name type="common">Human</name>
    <dbReference type="NCBI Taxonomy" id="9606"/>
</organismHost>
<name>PG138_VAR67</name>
<keyword id="KW-0426">Late protein</keyword>
<keyword id="KW-1185">Reference proteome</keyword>
<keyword id="KW-0946">Virion</keyword>
<feature type="chain" id="PRO_0000099238" description="25 kDa core protein OPG138" evidence="1">
    <location>
        <begin position="1"/>
        <end position="189"/>
    </location>
</feature>
<feature type="chain" id="PRO_0000413916" description="17 kDa core protein OPG138" evidence="1">
    <location>
        <begin position="1"/>
        <end position="56"/>
    </location>
</feature>
<feature type="region of interest" description="Disordered" evidence="2">
    <location>
        <begin position="69"/>
        <end position="102"/>
    </location>
</feature>
<feature type="region of interest" description="Disordered" evidence="2">
    <location>
        <begin position="151"/>
        <end position="173"/>
    </location>
</feature>
<feature type="compositionally biased region" description="Low complexity" evidence="2">
    <location>
        <begin position="69"/>
        <end position="89"/>
    </location>
</feature>
<feature type="compositionally biased region" description="Basic residues" evidence="2">
    <location>
        <begin position="151"/>
        <end position="161"/>
    </location>
</feature>
<feature type="site" description="Cleavage; by OPG083 protease" evidence="1">
    <location>
        <begin position="56"/>
        <end position="57"/>
    </location>
</feature>
<protein>
    <recommendedName>
        <fullName>25 kDa core protein OPG138</fullName>
    </recommendedName>
    <component>
        <recommendedName>
            <fullName>17 kDa core protein OPG138</fullName>
            <shortName>17K</shortName>
        </recommendedName>
    </component>
</protein>
<proteinExistence type="evidence at transcript level"/>
<sequence length="189" mass="20192">MADKKNLAVRSSYDDYIETVNKITPQLKNLLAQIGGDAAVKGGNNNLNSQTDVTAGACDTKSKSSKCITCKSKSSSSSTSTSKSSKNTSGAPRRRTTATTSFNAMDGQIVQAVTNAGKIVYGTVRDGQLEVRGMVGEINHDLLGIESVNAGKKKPSKKMPTNKKINMSSGMRRQEQINPNDCCLDMGMY</sequence>
<organism>
    <name type="scientific">Variola virus (isolate Human/India/Ind3/1967)</name>
    <name type="common">VARV</name>
    <name type="synonym">Smallpox virus</name>
    <dbReference type="NCBI Taxonomy" id="587200"/>
    <lineage>
        <taxon>Viruses</taxon>
        <taxon>Varidnaviria</taxon>
        <taxon>Bamfordvirae</taxon>
        <taxon>Nucleocytoviricota</taxon>
        <taxon>Pokkesviricetes</taxon>
        <taxon>Chitovirales</taxon>
        <taxon>Poxviridae</taxon>
        <taxon>Chordopoxvirinae</taxon>
        <taxon>Orthopoxvirus</taxon>
        <taxon>Variola virus</taxon>
    </lineage>
</organism>
<gene>
    <name type="primary">OPG138</name>
    <name type="ORF">A12L</name>
</gene>
<dbReference type="EMBL" id="X69198">
    <property type="protein sequence ID" value="CAA49057.1"/>
    <property type="molecule type" value="Genomic_DNA"/>
</dbReference>
<dbReference type="PIR" id="D36849">
    <property type="entry name" value="D36849"/>
</dbReference>
<dbReference type="RefSeq" id="NP_042160.1">
    <property type="nucleotide sequence ID" value="NC_001611.1"/>
</dbReference>
<dbReference type="SMR" id="P0DOK9"/>
<dbReference type="GeneID" id="1486487"/>
<dbReference type="KEGG" id="vg:1486487"/>
<dbReference type="Proteomes" id="UP000002060">
    <property type="component" value="Segment"/>
</dbReference>
<dbReference type="GO" id="GO:0044423">
    <property type="term" value="C:virion component"/>
    <property type="evidence" value="ECO:0007669"/>
    <property type="project" value="UniProtKB-KW"/>
</dbReference>
<dbReference type="InterPro" id="IPR006744">
    <property type="entry name" value="Poxvirus_A12"/>
</dbReference>
<dbReference type="Pfam" id="PF04651">
    <property type="entry name" value="Pox_A12"/>
    <property type="match status" value="1"/>
</dbReference>
<evidence type="ECO:0000250" key="1">
    <source>
        <dbReference type="UniProtKB" id="Q80HV7"/>
    </source>
</evidence>
<evidence type="ECO:0000256" key="2">
    <source>
        <dbReference type="SAM" id="MobiDB-lite"/>
    </source>
</evidence>
<evidence type="ECO:0000305" key="3"/>
<reference key="1">
    <citation type="journal article" date="1993" name="FEBS Lett.">
        <title>Genes of variola and vaccinia viruses necessary to overcome the host protective mechanisms.</title>
        <authorList>
            <person name="Shchelkunov S.N."/>
            <person name="Blinov V.M."/>
            <person name="Sandakhchiev L.S."/>
        </authorList>
    </citation>
    <scope>NUCLEOTIDE SEQUENCE [LARGE SCALE GENOMIC DNA]</scope>
</reference>
<accession>P0DOK9</accession>
<accession>P33837</accession>
<comment type="function">
    <text evidence="1">Component of the virion core that undergoes proteolytic processing during the immature virion (IV) to mature virion (MV) transition. Essential for the formation of a structurally normal core.</text>
</comment>
<comment type="subcellular location">
    <molecule>25 kDa core protein OPG138</molecule>
    <subcellularLocation>
        <location evidence="1">Virion</location>
    </subcellularLocation>
    <text evidence="1">Localizes to the virion core.</text>
</comment>
<comment type="subcellular location">
    <molecule>17 kDa core protein OPG138</molecule>
    <subcellularLocation>
        <location evidence="1">Virion</location>
    </subcellularLocation>
    <text evidence="1">Localizes to the virion core.</text>
</comment>
<comment type="induction">
    <text>Expressed in the late phase of the viral replicative cycle.</text>
</comment>
<comment type="PTM">
    <text evidence="1">The 25-kDa precursor is cleaved to a mature protein of 17 kDa during virion maturation. Further proteolytic processing is supposed to occur since five more OPG138-derived products have been observed.</text>
</comment>
<comment type="similarity">
    <text evidence="3">Belongs to the orthopoxvirus OPG138 family.</text>
</comment>